<evidence type="ECO:0000250" key="1">
    <source>
        <dbReference type="UniProtKB" id="P0C048"/>
    </source>
</evidence>
<evidence type="ECO:0000250" key="2">
    <source>
        <dbReference type="UniProtKB" id="Q2G184"/>
    </source>
</evidence>
<evidence type="ECO:0000255" key="3"/>
<evidence type="ECO:0000255" key="4">
    <source>
        <dbReference type="PROSITE-ProRule" id="PRU00289"/>
    </source>
</evidence>
<evidence type="ECO:0000305" key="5"/>
<protein>
    <recommendedName>
        <fullName evidence="1">Type VII secretion system protein EssC</fullName>
    </recommendedName>
</protein>
<organism>
    <name type="scientific">Staphylococcus aureus (strain MW2)</name>
    <dbReference type="NCBI Taxonomy" id="196620"/>
    <lineage>
        <taxon>Bacteria</taxon>
        <taxon>Bacillati</taxon>
        <taxon>Bacillota</taxon>
        <taxon>Bacilli</taxon>
        <taxon>Bacillales</taxon>
        <taxon>Staphylococcaceae</taxon>
        <taxon>Staphylococcus</taxon>
    </lineage>
</organism>
<proteinExistence type="inferred from homology"/>
<comment type="function">
    <text evidence="2">Component of the type VII secretion system (Ess). Required for the secretion of substrates including EsxA and EsxB. However, unable to support secretion of the substrate protein EsxC.</text>
</comment>
<comment type="subunit">
    <text evidence="2">Homooligomer. Interacts with EsaE.</text>
</comment>
<comment type="subcellular location">
    <subcellularLocation>
        <location evidence="2">Cell membrane</location>
        <topology evidence="3">Multi-pass membrane protein</topology>
    </subcellularLocation>
</comment>
<comment type="similarity">
    <text evidence="5">Belongs to the EssC family.</text>
</comment>
<feature type="chain" id="PRO_0000098335" description="Type VII secretion system protein EssC">
    <location>
        <begin position="1"/>
        <end position="1479"/>
    </location>
</feature>
<feature type="topological domain" description="Cytoplasmic" evidence="1">
    <location>
        <begin position="1"/>
        <end position="229"/>
    </location>
</feature>
<feature type="transmembrane region" description="Helical" evidence="3">
    <location>
        <begin position="230"/>
        <end position="252"/>
    </location>
</feature>
<feature type="topological domain" description="Extracellular" evidence="1">
    <location>
        <begin position="253"/>
        <end position="256"/>
    </location>
</feature>
<feature type="transmembrane region" description="Helical" evidence="3">
    <location>
        <begin position="257"/>
        <end position="279"/>
    </location>
</feature>
<feature type="topological domain" description="Cytoplasmic" evidence="1">
    <location>
        <begin position="280"/>
        <end position="1479"/>
    </location>
</feature>
<feature type="domain" description="FtsK 1" evidence="4">
    <location>
        <begin position="652"/>
        <end position="846"/>
    </location>
</feature>
<feature type="domain" description="FtsK 2" evidence="4">
    <location>
        <begin position="997"/>
        <end position="1183"/>
    </location>
</feature>
<feature type="binding site" evidence="4">
    <location>
        <begin position="672"/>
        <end position="679"/>
    </location>
    <ligand>
        <name>ATP</name>
        <dbReference type="ChEBI" id="CHEBI:30616"/>
    </ligand>
</feature>
<feature type="binding site" evidence="4">
    <location>
        <begin position="1014"/>
        <end position="1021"/>
    </location>
    <ligand>
        <name>ATP</name>
        <dbReference type="ChEBI" id="CHEBI:30616"/>
    </ligand>
</feature>
<dbReference type="EMBL" id="BA000033">
    <property type="protein sequence ID" value="BAB94128.1"/>
    <property type="molecule type" value="Genomic_DNA"/>
</dbReference>
<dbReference type="RefSeq" id="WP_000549274.1">
    <property type="nucleotide sequence ID" value="NC_003923.1"/>
</dbReference>
<dbReference type="SMR" id="Q8NYF3"/>
<dbReference type="KEGG" id="sam:MW0263"/>
<dbReference type="HOGENOM" id="CLU_003134_2_1_9"/>
<dbReference type="EvolutionaryTrace" id="Q8NYF3"/>
<dbReference type="GO" id="GO:0005886">
    <property type="term" value="C:plasma membrane"/>
    <property type="evidence" value="ECO:0007669"/>
    <property type="project" value="UniProtKB-SubCell"/>
</dbReference>
<dbReference type="GO" id="GO:0005524">
    <property type="term" value="F:ATP binding"/>
    <property type="evidence" value="ECO:0007669"/>
    <property type="project" value="UniProtKB-KW"/>
</dbReference>
<dbReference type="GO" id="GO:0003677">
    <property type="term" value="F:DNA binding"/>
    <property type="evidence" value="ECO:0007669"/>
    <property type="project" value="InterPro"/>
</dbReference>
<dbReference type="CDD" id="cd01127">
    <property type="entry name" value="TrwB_TraG_TraD_VirD4"/>
    <property type="match status" value="1"/>
</dbReference>
<dbReference type="Gene3D" id="2.60.200.20">
    <property type="match status" value="2"/>
</dbReference>
<dbReference type="Gene3D" id="3.40.50.300">
    <property type="entry name" value="P-loop containing nucleotide triphosphate hydrolases"/>
    <property type="match status" value="2"/>
</dbReference>
<dbReference type="InterPro" id="IPR023839">
    <property type="entry name" value="Firmicutes_EssC_C"/>
</dbReference>
<dbReference type="InterPro" id="IPR022206">
    <property type="entry name" value="Firmicutes_EssC_N"/>
</dbReference>
<dbReference type="InterPro" id="IPR050206">
    <property type="entry name" value="FtsK/SpoIIIE/SftA"/>
</dbReference>
<dbReference type="InterPro" id="IPR002543">
    <property type="entry name" value="FtsK_dom"/>
</dbReference>
<dbReference type="InterPro" id="IPR027417">
    <property type="entry name" value="P-loop_NTPase"/>
</dbReference>
<dbReference type="InterPro" id="IPR008984">
    <property type="entry name" value="SMAD_FHA_dom_sf"/>
</dbReference>
<dbReference type="NCBIfam" id="TIGR03928">
    <property type="entry name" value="T7_EssCb_Firm"/>
    <property type="match status" value="1"/>
</dbReference>
<dbReference type="PANTHER" id="PTHR22683:SF41">
    <property type="entry name" value="DNA TRANSLOCASE FTSK"/>
    <property type="match status" value="1"/>
</dbReference>
<dbReference type="PANTHER" id="PTHR22683">
    <property type="entry name" value="SPORULATION PROTEIN RELATED"/>
    <property type="match status" value="1"/>
</dbReference>
<dbReference type="Pfam" id="PF01580">
    <property type="entry name" value="FtsK_SpoIIIE"/>
    <property type="match status" value="2"/>
</dbReference>
<dbReference type="Pfam" id="PF12538">
    <property type="entry name" value="FtsK_SpoIIIE_N"/>
    <property type="match status" value="1"/>
</dbReference>
<dbReference type="SUPFAM" id="SSF52540">
    <property type="entry name" value="P-loop containing nucleoside triphosphate hydrolases"/>
    <property type="match status" value="2"/>
</dbReference>
<dbReference type="SUPFAM" id="SSF49879">
    <property type="entry name" value="SMAD/FHA domain"/>
    <property type="match status" value="2"/>
</dbReference>
<dbReference type="PROSITE" id="PS50901">
    <property type="entry name" value="FTSK"/>
    <property type="match status" value="2"/>
</dbReference>
<gene>
    <name evidence="1" type="primary">essC</name>
    <name type="ordered locus">MW0263</name>
</gene>
<name>ESSC_STAAW</name>
<reference key="1">
    <citation type="journal article" date="2002" name="Lancet">
        <title>Genome and virulence determinants of high virulence community-acquired MRSA.</title>
        <authorList>
            <person name="Baba T."/>
            <person name="Takeuchi F."/>
            <person name="Kuroda M."/>
            <person name="Yuzawa H."/>
            <person name="Aoki K."/>
            <person name="Oguchi A."/>
            <person name="Nagai Y."/>
            <person name="Iwama N."/>
            <person name="Asano K."/>
            <person name="Naimi T."/>
            <person name="Kuroda H."/>
            <person name="Cui L."/>
            <person name="Yamamoto K."/>
            <person name="Hiramatsu K."/>
        </authorList>
    </citation>
    <scope>NUCLEOTIDE SEQUENCE [LARGE SCALE GENOMIC DNA]</scope>
    <source>
        <strain>MW2</strain>
    </source>
</reference>
<accession>Q8NYF3</accession>
<keyword id="KW-0067">ATP-binding</keyword>
<keyword id="KW-1003">Cell membrane</keyword>
<keyword id="KW-0472">Membrane</keyword>
<keyword id="KW-0547">Nucleotide-binding</keyword>
<keyword id="KW-0677">Repeat</keyword>
<keyword id="KW-0812">Transmembrane</keyword>
<keyword id="KW-1133">Transmembrane helix</keyword>
<keyword id="KW-0843">Virulence</keyword>
<sequence>MHKLIIKYNKQLKMLNLRDGKTYTISEDERADITLKSLGEVIHLEQNNQGTWQANHTSINKVLVRKGDLDDITLQLYTEADYASFAYPSIQDTMTIGPNAYDDMVIQSLMNAIIIKDFQSIQESQYVRIVHDKNTDVYINYELQEQLTNKAYIGDHIYVEGIWLEVQADGLNVLSQNTVASSLIRLTQEMPHAQADDYNTYHRSPRIIHREPTDDIKIERPPQPIQKNNTVIWRSIIPPLVMIALTVVIFLVRPIGIYILMMIGMSSVTIVFGITTYFSEKKKYNKDVEKREKDYKDYLDNKSKEINKAIKAQRFSLNYHYPTVAEIKDIVETKAPRIYEKTSHHHDFLHYKLGIANVEKSFKLDYQEEEFNQRRDELFDDAKELYEFYTDVEQAPLINDLNHGPIAYIGARHLILEELEKMLIQLSIFHSYHDLEFLFVTREDEVETLKWARWLPHMTLRGQNIRGFVYNQRTRDQILTSIYSMIKERIQAVRERSKSNEQIIFTPQLVFVITDMSLIIDHVILEYVNQDLSEYGISLIFVEDVIESLPEHVDTIIDIKSRTEGELITKEKELVQLKFTPENIDNVDKEYIARRLANLIHVEHLKNAIPDSITFLEMYNVKEVDQLDVVNRWRQNETYKTMAVPLGVRGKDDILSLNLHEKAHGPHGLVAGTTGSGKSEIIQSYILSLAINFHPHEVAFLLIDYKGGGMANLFKDLVHLVGTITNLDGDEAMRALTSIKAELRKRQRLFGEHDVNHINQYHKLFKEGIATEPMPHLFIISDEFAELKSEQPDFMKELVSTARIGRSLGIHLILATQKPSGVVDDQIWSNSKFKLALKVQDRQDSNEILKTPDAADITLPGRAYLQVGNNEIYELFQSAWSGATYDIEGDKLEVEDKTIYMINDYGQLQAINKDLSGLEDEETKENQTELEAVIDHIESITTRLEIEEVKRPWLPPLPENVYQEDLVETDFRKLWSDDAKEVELTLGLKDVPEEQYQGPMVLQLKKAGHIALIGSPGYGRTTFLHNIIFDVARHHRPDQAHMYLFDFGTNGLMPVTDIPHVADYFTVDQEDKIAKAIRIFNDEIDRRKKILSQYRVTSISEYRKLTGETIPHVFILIDNFDAVKDSPFQEVFENMMIKMTREGLALDMQVTLTASRANAMKTPMYINMKTRIAMFLYDKSEVSNVVGQQKFAVKDVVGRALLSSDDNVSFHIGQPFKHDETKSYNDQINDEVSAMTEFYKGETPSDIPMMPDEIKYEDYRESLSLPDIVANGALPIGLDYEGVTLQKIKLTEPAMISSENPREIAHIAEIMMKEIDILNEKYAICIADSSGEFKAYRHQVANFAEEREDIKAIHQLMIEDLKQREMDGPFEKDSLYIINDFKTFIDCTYIPEDDVKKLITKGPELGLNILFVGIHKELIDAYDKQIDVARKMINQFSIGIRISDQQFFKFRFIQREPVIKENEAYMVANQAYQKIRWFK</sequence>